<accession>O34299</accession>
<organism>
    <name type="scientific">Agrobacterium vitis</name>
    <name type="common">Rhizobium vitis</name>
    <dbReference type="NCBI Taxonomy" id="373"/>
    <lineage>
        <taxon>Bacteria</taxon>
        <taxon>Pseudomonadati</taxon>
        <taxon>Pseudomonadota</taxon>
        <taxon>Alphaproteobacteria</taxon>
        <taxon>Hyphomicrobiales</taxon>
        <taxon>Rhizobiaceae</taxon>
        <taxon>Rhizobium/Agrobacterium group</taxon>
        <taxon>Agrobacterium</taxon>
    </lineage>
</organism>
<reference key="1">
    <citation type="submission" date="1997-06" db="EMBL/GenBank/DDBJ databases">
        <authorList>
            <person name="Salomone J.-Y."/>
            <person name="Crouzet P."/>
            <person name="de Ruffray P."/>
            <person name="Otten L."/>
        </authorList>
    </citation>
    <scope>NUCLEOTIDE SEQUENCE [GENOMIC DNA]</scope>
    <source>
        <strain>AB3</strain>
    </source>
</reference>
<name>YZ2T_AGRVI</name>
<dbReference type="EMBL" id="AF010415">
    <property type="protein sequence ID" value="AAB67102.1"/>
    <property type="molecule type" value="Genomic_DNA"/>
</dbReference>
<dbReference type="InterPro" id="IPR002823">
    <property type="entry name" value="DUF112_TM"/>
</dbReference>
<dbReference type="PANTHER" id="PTHR35342">
    <property type="entry name" value="TRICARBOXYLIC TRANSPORT PROTEIN"/>
    <property type="match status" value="1"/>
</dbReference>
<dbReference type="PANTHER" id="PTHR35342:SF5">
    <property type="entry name" value="TRICARBOXYLIC TRANSPORT PROTEIN"/>
    <property type="match status" value="1"/>
</dbReference>
<dbReference type="Pfam" id="PF01970">
    <property type="entry name" value="TctA"/>
    <property type="match status" value="1"/>
</dbReference>
<sequence>GSLLGVLPGGGHVLASFASYSVEKNLSKNPAEFGHGAIEGVAGPESANNAAAQTSFIPLLTLGIPAHPVMALIVGAFILQGITPGPDVITSQPALFWGIIASMWIGNLLLVILNLPLIGLWVKMLTIPYRMLFPAIVIFASIGCYSINNNPFDVYAIIVSGILGYVLIRVGCEPAPLLLGFVLGPLLEEHLRRAMIISRGDATVFVTNPIAASLLGLGLVCVILALLPSIRSKRDQVFVEDD</sequence>
<keyword id="KW-0614">Plasmid</keyword>
<geneLocation type="plasmid">
    <name>pTiAB3</name>
</geneLocation>
<protein>
    <recommendedName>
        <fullName>Uncharacterized protein in TAR-II ttuC' 3'region</fullName>
    </recommendedName>
    <alternativeName>
        <fullName>ORFZ2</fullName>
    </alternativeName>
</protein>
<feature type="chain" id="PRO_0000066555" description="Uncharacterized protein in TAR-II ttuC' 3'region">
    <location>
        <begin position="1" status="less than"/>
        <end position="242"/>
    </location>
</feature>
<feature type="non-terminal residue">
    <location>
        <position position="1"/>
    </location>
</feature>
<proteinExistence type="predicted"/>